<reference evidence="3" key="1">
    <citation type="journal article" date="2001" name="Planta">
        <title>Proteomic analysis reveals a novel set of cell wall proteins in a transformed tobacco cell culture that synthesises secondary walls as determined by biochemical and morphological parameters.</title>
        <authorList>
            <person name="Blee K.A."/>
            <person name="Wheatley E.R."/>
            <person name="Bonham V.A."/>
            <person name="Mitchell G.P."/>
            <person name="Robertson D."/>
            <person name="Slabas A.R."/>
            <person name="Burrell M.M."/>
            <person name="Wojtaszek P."/>
            <person name="Bolwell G.P."/>
        </authorList>
    </citation>
    <scope>PROTEIN SEQUENCE</scope>
    <scope>SUBCELLULAR LOCATION</scope>
    <source>
        <strain evidence="1">cv. Petit Havana</strain>
    </source>
</reference>
<dbReference type="PaxDb" id="4097-P82442"/>
<dbReference type="Proteomes" id="UP000084051">
    <property type="component" value="Unplaced"/>
</dbReference>
<dbReference type="GO" id="GO:0005576">
    <property type="term" value="C:extracellular region"/>
    <property type="evidence" value="ECO:0007669"/>
    <property type="project" value="UniProtKB-KW"/>
</dbReference>
<organism>
    <name type="scientific">Nicotiana tabacum</name>
    <name type="common">Common tobacco</name>
    <dbReference type="NCBI Taxonomy" id="4097"/>
    <lineage>
        <taxon>Eukaryota</taxon>
        <taxon>Viridiplantae</taxon>
        <taxon>Streptophyta</taxon>
        <taxon>Embryophyta</taxon>
        <taxon>Tracheophyta</taxon>
        <taxon>Spermatophyta</taxon>
        <taxon>Magnoliopsida</taxon>
        <taxon>eudicotyledons</taxon>
        <taxon>Gunneridae</taxon>
        <taxon>Pentapetalae</taxon>
        <taxon>asterids</taxon>
        <taxon>lamiids</taxon>
        <taxon>Solanales</taxon>
        <taxon>Solanaceae</taxon>
        <taxon>Nicotianoideae</taxon>
        <taxon>Nicotianeae</taxon>
        <taxon>Nicotiana</taxon>
    </lineage>
</organism>
<sequence length="15" mass="1807">SPVDKTFLARYREXN</sequence>
<evidence type="ECO:0000269" key="1">
    <source>
    </source>
</evidence>
<evidence type="ECO:0000303" key="2">
    <source>
    </source>
</evidence>
<evidence type="ECO:0000305" key="3"/>
<keyword id="KW-0134">Cell wall</keyword>
<keyword id="KW-0903">Direct protein sequencing</keyword>
<keyword id="KW-1185">Reference proteome</keyword>
<keyword id="KW-0964">Secreted</keyword>
<protein>
    <recommendedName>
        <fullName>68 kDa cell wall protein</fullName>
    </recommendedName>
</protein>
<comment type="subcellular location">
    <subcellularLocation>
        <location evidence="1">Secreted</location>
        <location evidence="1">Cell wall</location>
    </subcellularLocation>
</comment>
<feature type="chain" id="PRO_0000079724" description="68 kDa cell wall protein">
    <location>
        <begin position="1"/>
        <end position="15" status="greater than"/>
    </location>
</feature>
<feature type="non-terminal residue" evidence="2">
    <location>
        <position position="15"/>
    </location>
</feature>
<proteinExistence type="evidence at protein level"/>
<name>CWP34_TOBAC</name>
<accession>P82442</accession>